<feature type="chain" id="PRO_1000206049" description="Phosphoribosylformylglycinamidine synthase subunit PurL">
    <location>
        <begin position="1"/>
        <end position="709"/>
    </location>
</feature>
<feature type="active site" evidence="1">
    <location>
        <position position="36"/>
    </location>
</feature>
<feature type="active site" description="Proton acceptor" evidence="1">
    <location>
        <position position="84"/>
    </location>
</feature>
<feature type="binding site" evidence="1">
    <location>
        <position position="39"/>
    </location>
    <ligand>
        <name>ATP</name>
        <dbReference type="ChEBI" id="CHEBI:30616"/>
    </ligand>
</feature>
<feature type="binding site" evidence="1">
    <location>
        <position position="80"/>
    </location>
    <ligand>
        <name>ATP</name>
        <dbReference type="ChEBI" id="CHEBI:30616"/>
    </ligand>
</feature>
<feature type="binding site" evidence="1">
    <location>
        <position position="82"/>
    </location>
    <ligand>
        <name>Mg(2+)</name>
        <dbReference type="ChEBI" id="CHEBI:18420"/>
        <label>1</label>
    </ligand>
</feature>
<feature type="binding site" evidence="1">
    <location>
        <begin position="83"/>
        <end position="86"/>
    </location>
    <ligand>
        <name>substrate</name>
    </ligand>
</feature>
<feature type="binding site" evidence="1">
    <location>
        <position position="105"/>
    </location>
    <ligand>
        <name>substrate</name>
    </ligand>
</feature>
<feature type="binding site" evidence="1">
    <location>
        <position position="106"/>
    </location>
    <ligand>
        <name>Mg(2+)</name>
        <dbReference type="ChEBI" id="CHEBI:18420"/>
        <label>2</label>
    </ligand>
</feature>
<feature type="binding site" evidence="1">
    <location>
        <position position="226"/>
    </location>
    <ligand>
        <name>substrate</name>
    </ligand>
</feature>
<feature type="binding site" evidence="1">
    <location>
        <position position="252"/>
    </location>
    <ligand>
        <name>Mg(2+)</name>
        <dbReference type="ChEBI" id="CHEBI:18420"/>
        <label>2</label>
    </ligand>
</feature>
<feature type="binding site" evidence="1">
    <location>
        <begin position="294"/>
        <end position="296"/>
    </location>
    <ligand>
        <name>substrate</name>
    </ligand>
</feature>
<feature type="binding site" evidence="1">
    <location>
        <position position="470"/>
    </location>
    <ligand>
        <name>ATP</name>
        <dbReference type="ChEBI" id="CHEBI:30616"/>
    </ligand>
</feature>
<feature type="binding site" evidence="1">
    <location>
        <position position="507"/>
    </location>
    <ligand>
        <name>ATP</name>
        <dbReference type="ChEBI" id="CHEBI:30616"/>
    </ligand>
</feature>
<feature type="binding site" evidence="1">
    <location>
        <position position="510"/>
    </location>
    <ligand>
        <name>substrate</name>
    </ligand>
</feature>
<sequence>MGLNLLPIEMDDIRKRLDREPNEIEWRVIDAVWSEHCSYKSSKIFLKSFSIDSPNVIMGIKDWQDAGAVDIGDGWAIVIKVESHNHPSAIDPFNGAATGVGGIIRDIISKGAKPIALMDMIRVGNLKIRKNVWLLKNIIAGIAAYGNSIGVPVVGGELSFDDTYNDNPLVDVAAIGIVRKDKIKPSIVDKAGLKLVLAGLTGIDGLGGASFASRKLSGEDEIGAVQIADPFAGKIILDVTLEIADKVEAIKDLGGGGLAVAVTEMANGLGAIVDIEKIPLRVKNMDPADVIISETQERMLYAVEEKNVEEVCKAFEEYEYPCSVIGEITSEPIIKFRYFGKDLVSLPTNALLEPPKFLWPIKNVRKNVEEKNVDLSLESTIYTVLSHPDLVSKEWVYSQFDYEVNTSTVVKPGDANGAVVSLPNGKLLAIKADGNPDLCSEDAYECGKGIVAEAYRNLATVGARGMVAVDHLQFGDPKKPEVYYTFVEAIRGIGEATRFFNIPIVGGKVSFYNENSQGKPIKPTPLIVMAGLVQGKLLKNRVEDSSYVVLLGYTRKELGGSLLSKIFKVPSQAPKVRLQEDLLSSEVVIDAINEEKITFAKDISRGGLAASLFNIIVHGYGVEISTKSILSDTDNVVENLFSESSGRFVILTNEPEWIVEKSRSKGIVASIIGKVNKKTSILTIDNTDYDLKTIVNNYFNFLEEVIGNG</sequence>
<proteinExistence type="inferred from homology"/>
<evidence type="ECO:0000255" key="1">
    <source>
        <dbReference type="HAMAP-Rule" id="MF_00420"/>
    </source>
</evidence>
<keyword id="KW-0067">ATP-binding</keyword>
<keyword id="KW-0963">Cytoplasm</keyword>
<keyword id="KW-0436">Ligase</keyword>
<keyword id="KW-0460">Magnesium</keyword>
<keyword id="KW-0479">Metal-binding</keyword>
<keyword id="KW-0547">Nucleotide-binding</keyword>
<keyword id="KW-0658">Purine biosynthesis</keyword>
<organism>
    <name type="scientific">Saccharolobus islandicus (strain Y.G.57.14 / Yellowstone #1)</name>
    <name type="common">Sulfolobus islandicus</name>
    <dbReference type="NCBI Taxonomy" id="439386"/>
    <lineage>
        <taxon>Archaea</taxon>
        <taxon>Thermoproteota</taxon>
        <taxon>Thermoprotei</taxon>
        <taxon>Sulfolobales</taxon>
        <taxon>Sulfolobaceae</taxon>
        <taxon>Saccharolobus</taxon>
    </lineage>
</organism>
<protein>
    <recommendedName>
        <fullName evidence="1">Phosphoribosylformylglycinamidine synthase subunit PurL</fullName>
        <shortName evidence="1">FGAM synthase</shortName>
        <ecNumber evidence="1">6.3.5.3</ecNumber>
    </recommendedName>
    <alternativeName>
        <fullName evidence="1">Formylglycinamide ribonucleotide amidotransferase subunit II</fullName>
        <shortName evidence="1">FGAR amidotransferase II</shortName>
        <shortName evidence="1">FGAR-AT II</shortName>
    </alternativeName>
    <alternativeName>
        <fullName evidence="1">Glutamine amidotransferase PurL</fullName>
    </alternativeName>
    <alternativeName>
        <fullName evidence="1">Phosphoribosylformylglycinamidine synthase subunit II</fullName>
    </alternativeName>
</protein>
<name>PURL_SACI7</name>
<comment type="function">
    <text evidence="1">Part of the phosphoribosylformylglycinamidine synthase complex involved in the purines biosynthetic pathway. Catalyzes the ATP-dependent conversion of formylglycinamide ribonucleotide (FGAR) and glutamine to yield formylglycinamidine ribonucleotide (FGAM) and glutamate. The FGAM synthase complex is composed of three subunits. PurQ produces an ammonia molecule by converting glutamine to glutamate. PurL transfers the ammonia molecule to FGAR to form FGAM in an ATP-dependent manner. PurS interacts with PurQ and PurL and is thought to assist in the transfer of the ammonia molecule from PurQ to PurL.</text>
</comment>
<comment type="catalytic activity">
    <reaction evidence="1">
        <text>N(2)-formyl-N(1)-(5-phospho-beta-D-ribosyl)glycinamide + L-glutamine + ATP + H2O = 2-formamido-N(1)-(5-O-phospho-beta-D-ribosyl)acetamidine + L-glutamate + ADP + phosphate + H(+)</text>
        <dbReference type="Rhea" id="RHEA:17129"/>
        <dbReference type="ChEBI" id="CHEBI:15377"/>
        <dbReference type="ChEBI" id="CHEBI:15378"/>
        <dbReference type="ChEBI" id="CHEBI:29985"/>
        <dbReference type="ChEBI" id="CHEBI:30616"/>
        <dbReference type="ChEBI" id="CHEBI:43474"/>
        <dbReference type="ChEBI" id="CHEBI:58359"/>
        <dbReference type="ChEBI" id="CHEBI:147286"/>
        <dbReference type="ChEBI" id="CHEBI:147287"/>
        <dbReference type="ChEBI" id="CHEBI:456216"/>
        <dbReference type="EC" id="6.3.5.3"/>
    </reaction>
</comment>
<comment type="pathway">
    <text evidence="1">Purine metabolism; IMP biosynthesis via de novo pathway; 5-amino-1-(5-phospho-D-ribosyl)imidazole from N(2)-formyl-N(1)-(5-phospho-D-ribosyl)glycinamide: step 1/2.</text>
</comment>
<comment type="subunit">
    <text evidence="1">Monomer. Part of the FGAM synthase complex composed of 1 PurL, 1 PurQ and 2 PurS subunits.</text>
</comment>
<comment type="subcellular location">
    <subcellularLocation>
        <location evidence="1">Cytoplasm</location>
    </subcellularLocation>
</comment>
<comment type="similarity">
    <text evidence="1">Belongs to the FGAMS family.</text>
</comment>
<dbReference type="EC" id="6.3.5.3" evidence="1"/>
<dbReference type="EMBL" id="CP001403">
    <property type="protein sequence ID" value="ACP45769.1"/>
    <property type="molecule type" value="Genomic_DNA"/>
</dbReference>
<dbReference type="RefSeq" id="WP_012713791.1">
    <property type="nucleotide sequence ID" value="NC_012622.1"/>
</dbReference>
<dbReference type="SMR" id="C3NEN0"/>
<dbReference type="GeneID" id="7810114"/>
<dbReference type="KEGG" id="siy:YG5714_1507"/>
<dbReference type="HOGENOM" id="CLU_003100_0_1_2"/>
<dbReference type="UniPathway" id="UPA00074">
    <property type="reaction ID" value="UER00128"/>
</dbReference>
<dbReference type="Proteomes" id="UP000002308">
    <property type="component" value="Chromosome"/>
</dbReference>
<dbReference type="GO" id="GO:0005737">
    <property type="term" value="C:cytoplasm"/>
    <property type="evidence" value="ECO:0007669"/>
    <property type="project" value="UniProtKB-SubCell"/>
</dbReference>
<dbReference type="GO" id="GO:0005524">
    <property type="term" value="F:ATP binding"/>
    <property type="evidence" value="ECO:0007669"/>
    <property type="project" value="UniProtKB-UniRule"/>
</dbReference>
<dbReference type="GO" id="GO:0000287">
    <property type="term" value="F:magnesium ion binding"/>
    <property type="evidence" value="ECO:0007669"/>
    <property type="project" value="UniProtKB-UniRule"/>
</dbReference>
<dbReference type="GO" id="GO:0004642">
    <property type="term" value="F:phosphoribosylformylglycinamidine synthase activity"/>
    <property type="evidence" value="ECO:0007669"/>
    <property type="project" value="UniProtKB-UniRule"/>
</dbReference>
<dbReference type="GO" id="GO:0006189">
    <property type="term" value="P:'de novo' IMP biosynthetic process"/>
    <property type="evidence" value="ECO:0007669"/>
    <property type="project" value="UniProtKB-UniRule"/>
</dbReference>
<dbReference type="CDD" id="cd02203">
    <property type="entry name" value="PurL_repeat1"/>
    <property type="match status" value="1"/>
</dbReference>
<dbReference type="CDD" id="cd02204">
    <property type="entry name" value="PurL_repeat2"/>
    <property type="match status" value="1"/>
</dbReference>
<dbReference type="Gene3D" id="3.90.650.10">
    <property type="entry name" value="PurM-like C-terminal domain"/>
    <property type="match status" value="2"/>
</dbReference>
<dbReference type="Gene3D" id="3.30.1330.10">
    <property type="entry name" value="PurM-like, N-terminal domain"/>
    <property type="match status" value="2"/>
</dbReference>
<dbReference type="HAMAP" id="MF_00420">
    <property type="entry name" value="PurL_2"/>
    <property type="match status" value="1"/>
</dbReference>
<dbReference type="InterPro" id="IPR010074">
    <property type="entry name" value="PRibForGlyAmidine_synth_PurL"/>
</dbReference>
<dbReference type="InterPro" id="IPR041609">
    <property type="entry name" value="PurL_linker"/>
</dbReference>
<dbReference type="InterPro" id="IPR010918">
    <property type="entry name" value="PurM-like_C_dom"/>
</dbReference>
<dbReference type="InterPro" id="IPR036676">
    <property type="entry name" value="PurM-like_C_sf"/>
</dbReference>
<dbReference type="InterPro" id="IPR016188">
    <property type="entry name" value="PurM-like_N"/>
</dbReference>
<dbReference type="InterPro" id="IPR036921">
    <property type="entry name" value="PurM-like_N_sf"/>
</dbReference>
<dbReference type="NCBIfam" id="TIGR01736">
    <property type="entry name" value="FGAM_synth_II"/>
    <property type="match status" value="1"/>
</dbReference>
<dbReference type="NCBIfam" id="NF002290">
    <property type="entry name" value="PRK01213.1"/>
    <property type="match status" value="1"/>
</dbReference>
<dbReference type="PANTHER" id="PTHR43555">
    <property type="entry name" value="PHOSPHORIBOSYLFORMYLGLYCINAMIDINE SYNTHASE SUBUNIT PURL"/>
    <property type="match status" value="1"/>
</dbReference>
<dbReference type="PANTHER" id="PTHR43555:SF1">
    <property type="entry name" value="PHOSPHORIBOSYLFORMYLGLYCINAMIDINE SYNTHASE SUBUNIT PURL"/>
    <property type="match status" value="1"/>
</dbReference>
<dbReference type="Pfam" id="PF00586">
    <property type="entry name" value="AIRS"/>
    <property type="match status" value="2"/>
</dbReference>
<dbReference type="Pfam" id="PF02769">
    <property type="entry name" value="AIRS_C"/>
    <property type="match status" value="2"/>
</dbReference>
<dbReference type="Pfam" id="PF18072">
    <property type="entry name" value="FGAR-AT_linker"/>
    <property type="match status" value="1"/>
</dbReference>
<dbReference type="PIRSF" id="PIRSF001587">
    <property type="entry name" value="FGAM_synthase_II"/>
    <property type="match status" value="1"/>
</dbReference>
<dbReference type="SUPFAM" id="SSF56042">
    <property type="entry name" value="PurM C-terminal domain-like"/>
    <property type="match status" value="2"/>
</dbReference>
<dbReference type="SUPFAM" id="SSF55326">
    <property type="entry name" value="PurM N-terminal domain-like"/>
    <property type="match status" value="2"/>
</dbReference>
<accession>C3NEN0</accession>
<reference key="1">
    <citation type="journal article" date="2009" name="Proc. Natl. Acad. Sci. U.S.A.">
        <title>Biogeography of the Sulfolobus islandicus pan-genome.</title>
        <authorList>
            <person name="Reno M.L."/>
            <person name="Held N.L."/>
            <person name="Fields C.J."/>
            <person name="Burke P.V."/>
            <person name="Whitaker R.J."/>
        </authorList>
    </citation>
    <scope>NUCLEOTIDE SEQUENCE [LARGE SCALE GENOMIC DNA]</scope>
    <source>
        <strain>Y.G.57.14 / Yellowstone #1</strain>
    </source>
</reference>
<gene>
    <name evidence="1" type="primary">purL</name>
    <name type="ordered locus">YG5714_1507</name>
</gene>